<feature type="signal peptide" evidence="2">
    <location>
        <begin position="1"/>
        <end position="30"/>
    </location>
</feature>
<feature type="chain" id="PRO_0000384056" description="Beta-D-xylosidase 1">
    <location>
        <begin position="31"/>
        <end position="774"/>
    </location>
</feature>
<feature type="active site" evidence="1">
    <location>
        <position position="296"/>
    </location>
</feature>
<feature type="glycosylation site" description="N-linked (GlcNAc...) asparagine" evidence="2">
    <location>
        <position position="131"/>
    </location>
</feature>
<feature type="glycosylation site" description="N-linked (GlcNAc...) asparagine" evidence="2">
    <location>
        <position position="658"/>
    </location>
</feature>
<proteinExistence type="evidence at protein level"/>
<comment type="function">
    <text evidence="3 4 6">Involved in pectic arabinan modification in mucilage secretory cells. Also acts as a beta-D-xylosidase during the remodeling of xylans in vascular development.</text>
</comment>
<comment type="catalytic activity">
    <reaction evidence="4">
        <text>Hydrolysis of terminal non-reducing alpha-L-arabinofuranoside residues in alpha-L-arabinosides.</text>
        <dbReference type="EC" id="3.2.1.55"/>
    </reaction>
</comment>
<comment type="biophysicochemical properties">
    <kinetics>
        <KM evidence="4">1.2 mM for p-nitrophenyl-beta-D-xylopyranoside</KM>
    </kinetics>
    <phDependence>
        <text evidence="4">Optimum pH is 4.9.</text>
    </phDependence>
    <temperatureDependence>
        <text evidence="4">Optimum temperature is 55 degrees Celsius.</text>
    </temperatureDependence>
</comment>
<comment type="subcellular location">
    <subcellularLocation>
        <location evidence="7">Secreted</location>
        <location evidence="7">Extracellular space</location>
        <location evidence="7">Extracellular matrix</location>
    </subcellularLocation>
</comment>
<comment type="tissue specificity">
    <text evidence="3 4 6">Expressed in leaves, stems, seedlings, roots, inflorescences, siliques and developing seeds. Expressed in the vasculature of the roots, leaves, flowers and silique. Expressed in tissues undergoing secondary cell wall thickening such as protoxylem, metaxylem, intrafascicular cambium and fibers.</text>
</comment>
<comment type="induction">
    <text evidence="5">By sugar starvation.</text>
</comment>
<comment type="disruption phenotype">
    <text evidence="6">Delayed seeds germination resulting from an altered mucilage composition. No visible growth defects; probably due to partial redundancy with BXL2. Bxl1 and bxl2 double mutants have shortened siliques and curled leaf edges.</text>
</comment>
<comment type="miscellaneous">
    <text>Might be processed at the C-terminus.</text>
</comment>
<comment type="similarity">
    <text evidence="7">Belongs to the glycosyl hydrolase 3 family.</text>
</comment>
<organism>
    <name type="scientific">Arabidopsis thaliana</name>
    <name type="common">Mouse-ear cress</name>
    <dbReference type="NCBI Taxonomy" id="3702"/>
    <lineage>
        <taxon>Eukaryota</taxon>
        <taxon>Viridiplantae</taxon>
        <taxon>Streptophyta</taxon>
        <taxon>Embryophyta</taxon>
        <taxon>Tracheophyta</taxon>
        <taxon>Spermatophyta</taxon>
        <taxon>Magnoliopsida</taxon>
        <taxon>eudicotyledons</taxon>
        <taxon>Gunneridae</taxon>
        <taxon>Pentapetalae</taxon>
        <taxon>rosids</taxon>
        <taxon>malvids</taxon>
        <taxon>Brassicales</taxon>
        <taxon>Brassicaceae</taxon>
        <taxon>Camelineae</taxon>
        <taxon>Arabidopsis</taxon>
    </lineage>
</organism>
<accession>Q9FGY1</accession>
<gene>
    <name type="primary">BXL1</name>
    <name type="synonym">XYL1</name>
    <name type="ordered locus">At5g49360</name>
    <name type="ORF">K7J8.3</name>
</gene>
<protein>
    <recommendedName>
        <fullName>Beta-D-xylosidase 1</fullName>
        <shortName>AtBXL1</shortName>
        <ecNumber>3.2.1.-</ecNumber>
    </recommendedName>
    <alternativeName>
        <fullName>Alpha-L-arabinofuranosidase</fullName>
        <ecNumber>3.2.1.55</ecNumber>
    </alternativeName>
</protein>
<name>BXL1_ARATH</name>
<keyword id="KW-0272">Extracellular matrix</keyword>
<keyword id="KW-0325">Glycoprotein</keyword>
<keyword id="KW-0326">Glycosidase</keyword>
<keyword id="KW-0378">Hydrolase</keyword>
<keyword id="KW-1185">Reference proteome</keyword>
<keyword id="KW-0964">Secreted</keyword>
<keyword id="KW-0732">Signal</keyword>
<dbReference type="EC" id="3.2.1.-"/>
<dbReference type="EC" id="3.2.1.55"/>
<dbReference type="EMBL" id="AB023034">
    <property type="protein sequence ID" value="BAB09906.1"/>
    <property type="molecule type" value="Genomic_DNA"/>
</dbReference>
<dbReference type="EMBL" id="CP002688">
    <property type="protein sequence ID" value="AED95802.1"/>
    <property type="molecule type" value="Genomic_DNA"/>
</dbReference>
<dbReference type="EMBL" id="AY120767">
    <property type="protein sequence ID" value="AAM53325.1"/>
    <property type="molecule type" value="mRNA"/>
</dbReference>
<dbReference type="RefSeq" id="NP_199747.1">
    <property type="nucleotide sequence ID" value="NM_124313.3"/>
</dbReference>
<dbReference type="SMR" id="Q9FGY1"/>
<dbReference type="BioGRID" id="20242">
    <property type="interactions" value="4"/>
</dbReference>
<dbReference type="FunCoup" id="Q9FGY1">
    <property type="interactions" value="119"/>
</dbReference>
<dbReference type="STRING" id="3702.Q9FGY1"/>
<dbReference type="CAZy" id="GH3">
    <property type="family name" value="Glycoside Hydrolase Family 3"/>
</dbReference>
<dbReference type="GlyCosmos" id="Q9FGY1">
    <property type="glycosylation" value="2 sites, No reported glycans"/>
</dbReference>
<dbReference type="GlyGen" id="Q9FGY1">
    <property type="glycosylation" value="2 sites"/>
</dbReference>
<dbReference type="PaxDb" id="3702-AT5G49360.1"/>
<dbReference type="ProteomicsDB" id="240440"/>
<dbReference type="EnsemblPlants" id="AT5G49360.1">
    <property type="protein sequence ID" value="AT5G49360.1"/>
    <property type="gene ID" value="AT5G49360"/>
</dbReference>
<dbReference type="GeneID" id="834996"/>
<dbReference type="Gramene" id="AT5G49360.1">
    <property type="protein sequence ID" value="AT5G49360.1"/>
    <property type="gene ID" value="AT5G49360"/>
</dbReference>
<dbReference type="KEGG" id="ath:AT5G49360"/>
<dbReference type="Araport" id="AT5G49360"/>
<dbReference type="TAIR" id="AT5G49360">
    <property type="gene designation" value="BXL1"/>
</dbReference>
<dbReference type="eggNOG" id="ENOG502QQ55">
    <property type="taxonomic scope" value="Eukaryota"/>
</dbReference>
<dbReference type="HOGENOM" id="CLU_004542_5_3_1"/>
<dbReference type="InParanoid" id="Q9FGY1"/>
<dbReference type="OMA" id="VCTLAHR"/>
<dbReference type="PhylomeDB" id="Q9FGY1"/>
<dbReference type="BioCyc" id="ARA:AT5G49360-MONOMER"/>
<dbReference type="BRENDA" id="3.2.1.37">
    <property type="organism ID" value="399"/>
</dbReference>
<dbReference type="SABIO-RK" id="Q9FGY1"/>
<dbReference type="PRO" id="PR:Q9FGY1"/>
<dbReference type="Proteomes" id="UP000006548">
    <property type="component" value="Chromosome 5"/>
</dbReference>
<dbReference type="ExpressionAtlas" id="Q9FGY1">
    <property type="expression patterns" value="baseline and differential"/>
</dbReference>
<dbReference type="GO" id="GO:0048046">
    <property type="term" value="C:apoplast"/>
    <property type="evidence" value="ECO:0007005"/>
    <property type="project" value="TAIR"/>
</dbReference>
<dbReference type="GO" id="GO:0009536">
    <property type="term" value="C:plastid"/>
    <property type="evidence" value="ECO:0007005"/>
    <property type="project" value="TAIR"/>
</dbReference>
<dbReference type="GO" id="GO:0046556">
    <property type="term" value="F:alpha-L-arabinofuranosidase activity"/>
    <property type="evidence" value="ECO:0000314"/>
    <property type="project" value="TAIR"/>
</dbReference>
<dbReference type="GO" id="GO:0009044">
    <property type="term" value="F:xylan 1,4-beta-xylosidase activity"/>
    <property type="evidence" value="ECO:0007669"/>
    <property type="project" value="InterPro"/>
</dbReference>
<dbReference type="GO" id="GO:0010214">
    <property type="term" value="P:seed coat development"/>
    <property type="evidence" value="ECO:0000315"/>
    <property type="project" value="TAIR"/>
</dbReference>
<dbReference type="GO" id="GO:0045493">
    <property type="term" value="P:xylan catabolic process"/>
    <property type="evidence" value="ECO:0007669"/>
    <property type="project" value="InterPro"/>
</dbReference>
<dbReference type="FunFam" id="3.40.50.1700:FF:000001">
    <property type="entry name" value="probable beta-D-xylosidase 2"/>
    <property type="match status" value="1"/>
</dbReference>
<dbReference type="FunFam" id="3.20.20.300:FF:000004">
    <property type="entry name" value="probable beta-D-xylosidase 7"/>
    <property type="match status" value="1"/>
</dbReference>
<dbReference type="Gene3D" id="3.40.50.1700">
    <property type="entry name" value="Glycoside hydrolase family 3 C-terminal domain"/>
    <property type="match status" value="1"/>
</dbReference>
<dbReference type="Gene3D" id="3.20.20.300">
    <property type="entry name" value="Glycoside hydrolase, family 3, N-terminal domain"/>
    <property type="match status" value="1"/>
</dbReference>
<dbReference type="Gene3D" id="2.60.40.10">
    <property type="entry name" value="Immunoglobulins"/>
    <property type="match status" value="1"/>
</dbReference>
<dbReference type="InterPro" id="IPR044993">
    <property type="entry name" value="BXL"/>
</dbReference>
<dbReference type="InterPro" id="IPR026891">
    <property type="entry name" value="Fn3-like"/>
</dbReference>
<dbReference type="InterPro" id="IPR002772">
    <property type="entry name" value="Glyco_hydro_3_C"/>
</dbReference>
<dbReference type="InterPro" id="IPR036881">
    <property type="entry name" value="Glyco_hydro_3_C_sf"/>
</dbReference>
<dbReference type="InterPro" id="IPR001764">
    <property type="entry name" value="Glyco_hydro_3_N"/>
</dbReference>
<dbReference type="InterPro" id="IPR036962">
    <property type="entry name" value="Glyco_hydro_3_N_sf"/>
</dbReference>
<dbReference type="InterPro" id="IPR017853">
    <property type="entry name" value="Glycoside_hydrolase_SF"/>
</dbReference>
<dbReference type="InterPro" id="IPR013783">
    <property type="entry name" value="Ig-like_fold"/>
</dbReference>
<dbReference type="PANTHER" id="PTHR42721:SF8">
    <property type="entry name" value="BETA-D-XYLOSIDASE 1"/>
    <property type="match status" value="1"/>
</dbReference>
<dbReference type="PANTHER" id="PTHR42721">
    <property type="entry name" value="SUGAR HYDROLASE-RELATED"/>
    <property type="match status" value="1"/>
</dbReference>
<dbReference type="Pfam" id="PF14310">
    <property type="entry name" value="Fn3-like"/>
    <property type="match status" value="1"/>
</dbReference>
<dbReference type="Pfam" id="PF00933">
    <property type="entry name" value="Glyco_hydro_3"/>
    <property type="match status" value="1"/>
</dbReference>
<dbReference type="Pfam" id="PF01915">
    <property type="entry name" value="Glyco_hydro_3_C"/>
    <property type="match status" value="1"/>
</dbReference>
<dbReference type="PRINTS" id="PR00133">
    <property type="entry name" value="GLHYDRLASE3"/>
</dbReference>
<dbReference type="SMART" id="SM01217">
    <property type="entry name" value="Fn3_like"/>
    <property type="match status" value="1"/>
</dbReference>
<dbReference type="SUPFAM" id="SSF51445">
    <property type="entry name" value="(Trans)glycosidases"/>
    <property type="match status" value="1"/>
</dbReference>
<dbReference type="SUPFAM" id="SSF52279">
    <property type="entry name" value="Beta-D-glucan exohydrolase, C-terminal domain"/>
    <property type="match status" value="1"/>
</dbReference>
<evidence type="ECO:0000250" key="1"/>
<evidence type="ECO:0000255" key="2"/>
<evidence type="ECO:0000269" key="3">
    <source>
    </source>
</evidence>
<evidence type="ECO:0000269" key="4">
    <source>
    </source>
</evidence>
<evidence type="ECO:0000269" key="5">
    <source>
    </source>
</evidence>
<evidence type="ECO:0000269" key="6">
    <source>
    </source>
</evidence>
<evidence type="ECO:0000305" key="7"/>
<reference key="1">
    <citation type="journal article" date="2000" name="DNA Res.">
        <title>Structural analysis of Arabidopsis thaliana chromosome 5. X. Sequence features of the regions of 3,076,755 bp covered by sixty P1 and TAC clones.</title>
        <authorList>
            <person name="Sato S."/>
            <person name="Nakamura Y."/>
            <person name="Kaneko T."/>
            <person name="Katoh T."/>
            <person name="Asamizu E."/>
            <person name="Kotani H."/>
            <person name="Tabata S."/>
        </authorList>
    </citation>
    <scope>NUCLEOTIDE SEQUENCE [LARGE SCALE GENOMIC DNA]</scope>
    <source>
        <strain>cv. Columbia</strain>
    </source>
</reference>
<reference key="2">
    <citation type="journal article" date="2017" name="Plant J.">
        <title>Araport11: a complete reannotation of the Arabidopsis thaliana reference genome.</title>
        <authorList>
            <person name="Cheng C.Y."/>
            <person name="Krishnakumar V."/>
            <person name="Chan A.P."/>
            <person name="Thibaud-Nissen F."/>
            <person name="Schobel S."/>
            <person name="Town C.D."/>
        </authorList>
    </citation>
    <scope>GENOME REANNOTATION</scope>
    <source>
        <strain>cv. Columbia</strain>
    </source>
</reference>
<reference key="3">
    <citation type="journal article" date="2003" name="Science">
        <title>Empirical analysis of transcriptional activity in the Arabidopsis genome.</title>
        <authorList>
            <person name="Yamada K."/>
            <person name="Lim J."/>
            <person name="Dale J.M."/>
            <person name="Chen H."/>
            <person name="Shinn P."/>
            <person name="Palm C.J."/>
            <person name="Southwick A.M."/>
            <person name="Wu H.C."/>
            <person name="Kim C.J."/>
            <person name="Nguyen M."/>
            <person name="Pham P.K."/>
            <person name="Cheuk R.F."/>
            <person name="Karlin-Newmann G."/>
            <person name="Liu S.X."/>
            <person name="Lam B."/>
            <person name="Sakano H."/>
            <person name="Wu T."/>
            <person name="Yu G."/>
            <person name="Miranda M."/>
            <person name="Quach H.L."/>
            <person name="Tripp M."/>
            <person name="Chang C.H."/>
            <person name="Lee J.M."/>
            <person name="Toriumi M.J."/>
            <person name="Chan M.M."/>
            <person name="Tang C.C."/>
            <person name="Onodera C.S."/>
            <person name="Deng J.M."/>
            <person name="Akiyama K."/>
            <person name="Ansari Y."/>
            <person name="Arakawa T."/>
            <person name="Banh J."/>
            <person name="Banno F."/>
            <person name="Bowser L."/>
            <person name="Brooks S.Y."/>
            <person name="Carninci P."/>
            <person name="Chao Q."/>
            <person name="Choy N."/>
            <person name="Enju A."/>
            <person name="Goldsmith A.D."/>
            <person name="Gurjal M."/>
            <person name="Hansen N.F."/>
            <person name="Hayashizaki Y."/>
            <person name="Johnson-Hopson C."/>
            <person name="Hsuan V.W."/>
            <person name="Iida K."/>
            <person name="Karnes M."/>
            <person name="Khan S."/>
            <person name="Koesema E."/>
            <person name="Ishida J."/>
            <person name="Jiang P.X."/>
            <person name="Jones T."/>
            <person name="Kawai J."/>
            <person name="Kamiya A."/>
            <person name="Meyers C."/>
            <person name="Nakajima M."/>
            <person name="Narusaka M."/>
            <person name="Seki M."/>
            <person name="Sakurai T."/>
            <person name="Satou M."/>
            <person name="Tamse R."/>
            <person name="Vaysberg M."/>
            <person name="Wallender E.K."/>
            <person name="Wong C."/>
            <person name="Yamamura Y."/>
            <person name="Yuan S."/>
            <person name="Shinozaki K."/>
            <person name="Davis R.W."/>
            <person name="Theologis A."/>
            <person name="Ecker J.R."/>
        </authorList>
    </citation>
    <scope>NUCLEOTIDE SEQUENCE [LARGE SCALE MRNA]</scope>
    <source>
        <strain>cv. Columbia</strain>
    </source>
</reference>
<reference key="4">
    <citation type="journal article" date="2003" name="Plant J.">
        <title>AtBXL1, a novel higher plant (Arabidopsis thaliana) putative beta-xylosidase gene, is involved in secondary cell wall metabolism and plant development.</title>
        <authorList>
            <person name="Goujon T."/>
            <person name="Minic Z."/>
            <person name="El Amrani A."/>
            <person name="Lerouxel O."/>
            <person name="Aletti E."/>
            <person name="Lapierre C."/>
            <person name="Joseleau J.-P."/>
            <person name="Jouanin L."/>
        </authorList>
    </citation>
    <scope>FUNCTION</scope>
    <scope>TISSUE SPECIFICITY</scope>
</reference>
<reference key="5">
    <citation type="journal article" date="2004" name="Plant Physiol.">
        <title>Purification and characterization of enzymes exhibiting beta-D-xylosidase activities in stem tissues of Arabidopsis.</title>
        <authorList>
            <person name="Minic Z."/>
            <person name="Rihouey C."/>
            <person name="Do C.T."/>
            <person name="Lerouge P."/>
            <person name="Jouanin L."/>
        </authorList>
    </citation>
    <scope>FUNCTION</scope>
    <scope>CATALYTIC ACTIVITY</scope>
    <scope>BIOPHYSICOCHEMICAL PROPERTIES</scope>
    <scope>TISSUE SPECIFICITY</scope>
</reference>
<reference key="6">
    <citation type="journal article" date="2007" name="Plant Cell Physiol.">
        <title>Glycosyl hydrolases of cell wall are induced by sugar starvation in Arabidopsis.</title>
        <authorList>
            <person name="Lee E.-J."/>
            <person name="Matsumura Y."/>
            <person name="Soga K."/>
            <person name="Hoson T."/>
            <person name="Koizumi N."/>
        </authorList>
    </citation>
    <scope>INDUCTION BY SUGAR STARVATION</scope>
</reference>
<reference key="7">
    <citation type="journal article" date="2009" name="Plant Physiol.">
        <title>AtBXL1 encodes a bifunctional beta-D-xylosidase/alpha-L-arabinofuranosidase required for pectic arabinan modification in arabidopsis mucilage secretory cells.</title>
        <authorList>
            <person name="Arsovski A.A."/>
            <person name="Popma T.M."/>
            <person name="Haughn G.W."/>
            <person name="Carpita N.C."/>
            <person name="McCann M.C."/>
            <person name="Western T.L."/>
        </authorList>
    </citation>
    <scope>FUNCTION</scope>
    <scope>TISSUE SPECIFICITY</scope>
    <scope>DISRUPTION PHENOTYPE</scope>
</reference>
<sequence>MSCYNKALLIGNKVVVILVFLLCLVHSSESLRPLFACDPANGLTRTLRFCRANVPIHVRVQDLLGRLTLQEKIRNLVNNAAAVPRLGIGGYEWWSEALHGISDVGPGAKFGGAFPGATSFPQVITTAASFNQSLWEEIGRVVSDEARAMYNGGVAGLTYWSPNVNILRDPRWGRGQETPGEDPIVAAKYAASYVRGLQGTAAGNRLKVAACCKHYTAYDLDNWNGVDRFHFNAKVTQQDLEDTYNVPFKSCVYEGKVASVMCSYNQVNGKPTCADENLLKNTIRGQWRLNGYIVSDCDSVDVFFNQQHYTSTPEEAAARSIKAGLDLDCGPFLAIFTEGAVKKGLLTENDINLALANTLTVQMRLGMFDGNLGPYANLGPRDVCTPAHKHLALEAAHQGIVLLKNSARSLPLSPRRHRTVAVIGPNSDVTETMIGNYAGKACAYTSPLQGISRYARTLHQAGCAGVACKGNQGFGAAEAAAREADATVLVMGLDQSIEAETRDRTGLLLPGYQQDLVTRVAQASRGPVILVLMSGGPIDVTFAKNDPRVAAIIWAGYPGQAGGAAIANIIFGAANPGGKLPMTWYPQDYVAKVPMTVMAMRASGNYPGRTYRFYKGPVVFPFGFGLSYTTFTHSLAKSPLAQLSVSLSNLNSANTILNSSSHSIKVSHTNCNSFPKMPLHVEVSNTGEFDGTHTVFVFAEPPINGIKGLGVNKQLIAFEKVHVMAGAKQTVQVDVDACKHLGVVDEYGKRRIPMGEHKLHIGDLKHTILVQPQL</sequence>